<name>QUEF_PSEPF</name>
<reference key="1">
    <citation type="journal article" date="2009" name="Genome Biol.">
        <title>Genomic and genetic analyses of diversity and plant interactions of Pseudomonas fluorescens.</title>
        <authorList>
            <person name="Silby M.W."/>
            <person name="Cerdeno-Tarraga A.M."/>
            <person name="Vernikos G.S."/>
            <person name="Giddens S.R."/>
            <person name="Jackson R.W."/>
            <person name="Preston G.M."/>
            <person name="Zhang X.-X."/>
            <person name="Moon C.D."/>
            <person name="Gehrig S.M."/>
            <person name="Godfrey S.A.C."/>
            <person name="Knight C.G."/>
            <person name="Malone J.G."/>
            <person name="Robinson Z."/>
            <person name="Spiers A.J."/>
            <person name="Harris S."/>
            <person name="Challis G.L."/>
            <person name="Yaxley A.M."/>
            <person name="Harris D."/>
            <person name="Seeger K."/>
            <person name="Murphy L."/>
            <person name="Rutter S."/>
            <person name="Squares R."/>
            <person name="Quail M.A."/>
            <person name="Saunders E."/>
            <person name="Mavromatis K."/>
            <person name="Brettin T.S."/>
            <person name="Bentley S.D."/>
            <person name="Hothersall J."/>
            <person name="Stephens E."/>
            <person name="Thomas C.M."/>
            <person name="Parkhill J."/>
            <person name="Levy S.B."/>
            <person name="Rainey P.B."/>
            <person name="Thomson N.R."/>
        </authorList>
    </citation>
    <scope>NUCLEOTIDE SEQUENCE [LARGE SCALE GENOMIC DNA]</scope>
    <source>
        <strain>Pf0-1</strain>
    </source>
</reference>
<sequence>MHPAAEHSPLGKSSEYIATYTPSLLFPIPRTAKWAELGLTAETLPYKGVDFWNCFELSWLLPSGKPVVAIGEFSIPADSPNIIESKSFKLYLNSLNQTPFADTASLEATLVKDLSAAAGKPVGVRVRSLKDVEAEGVVALPGVCIDDLDISVSDYEHPRPELLRCDDSRVVEESVHSHLLKSNCPVTSQPDWGSVVVEYRGAALDHASLLEYIVSFRQHSDFHEQCVERIFLDLQRLLKPEKLTVFARYVRRGGLDINPYRSTESVQLPNHRLVRQ</sequence>
<feature type="chain" id="PRO_0000247712" description="NADPH-dependent 7-cyano-7-deazaguanine reductase">
    <location>
        <begin position="1"/>
        <end position="276"/>
    </location>
</feature>
<feature type="active site" description="Thioimide intermediate" evidence="1">
    <location>
        <position position="184"/>
    </location>
</feature>
<feature type="active site" description="Proton donor" evidence="1">
    <location>
        <position position="191"/>
    </location>
</feature>
<feature type="binding site" evidence="1">
    <location>
        <begin position="83"/>
        <end position="85"/>
    </location>
    <ligand>
        <name>substrate</name>
    </ligand>
</feature>
<feature type="binding site" evidence="1">
    <location>
        <begin position="85"/>
        <end position="86"/>
    </location>
    <ligand>
        <name>NADPH</name>
        <dbReference type="ChEBI" id="CHEBI:57783"/>
    </ligand>
</feature>
<feature type="binding site" evidence="1">
    <location>
        <begin position="223"/>
        <end position="224"/>
    </location>
    <ligand>
        <name>substrate</name>
    </ligand>
</feature>
<feature type="binding site" evidence="1">
    <location>
        <begin position="252"/>
        <end position="253"/>
    </location>
    <ligand>
        <name>NADPH</name>
        <dbReference type="ChEBI" id="CHEBI:57783"/>
    </ligand>
</feature>
<keyword id="KW-0963">Cytoplasm</keyword>
<keyword id="KW-0521">NADP</keyword>
<keyword id="KW-0560">Oxidoreductase</keyword>
<keyword id="KW-0671">Queuosine biosynthesis</keyword>
<proteinExistence type="inferred from homology"/>
<gene>
    <name evidence="1" type="primary">queF</name>
    <name type="ordered locus">Pfl01_3853</name>
</gene>
<dbReference type="EC" id="1.7.1.13" evidence="1"/>
<dbReference type="EMBL" id="CP000094">
    <property type="protein sequence ID" value="ABA75590.1"/>
    <property type="molecule type" value="Genomic_DNA"/>
</dbReference>
<dbReference type="RefSeq" id="WP_011335177.1">
    <property type="nucleotide sequence ID" value="NC_007492.2"/>
</dbReference>
<dbReference type="SMR" id="Q3K9G4"/>
<dbReference type="KEGG" id="pfo:Pfl01_3853"/>
<dbReference type="eggNOG" id="COG0780">
    <property type="taxonomic scope" value="Bacteria"/>
</dbReference>
<dbReference type="eggNOG" id="COG2904">
    <property type="taxonomic scope" value="Bacteria"/>
</dbReference>
<dbReference type="HOGENOM" id="CLU_054738_0_0_6"/>
<dbReference type="UniPathway" id="UPA00392"/>
<dbReference type="Proteomes" id="UP000002704">
    <property type="component" value="Chromosome"/>
</dbReference>
<dbReference type="GO" id="GO:0005737">
    <property type="term" value="C:cytoplasm"/>
    <property type="evidence" value="ECO:0007669"/>
    <property type="project" value="UniProtKB-SubCell"/>
</dbReference>
<dbReference type="GO" id="GO:0033739">
    <property type="term" value="F:preQ1 synthase activity"/>
    <property type="evidence" value="ECO:0007669"/>
    <property type="project" value="UniProtKB-UniRule"/>
</dbReference>
<dbReference type="GO" id="GO:0008616">
    <property type="term" value="P:queuosine biosynthetic process"/>
    <property type="evidence" value="ECO:0007669"/>
    <property type="project" value="UniProtKB-UniRule"/>
</dbReference>
<dbReference type="GO" id="GO:0006400">
    <property type="term" value="P:tRNA modification"/>
    <property type="evidence" value="ECO:0007669"/>
    <property type="project" value="UniProtKB-UniRule"/>
</dbReference>
<dbReference type="Gene3D" id="3.30.1130.10">
    <property type="match status" value="2"/>
</dbReference>
<dbReference type="HAMAP" id="MF_00817">
    <property type="entry name" value="QueF_type2"/>
    <property type="match status" value="1"/>
</dbReference>
<dbReference type="InterPro" id="IPR043133">
    <property type="entry name" value="GTP-CH-I_C/QueF"/>
</dbReference>
<dbReference type="InterPro" id="IPR050084">
    <property type="entry name" value="NADPH_dep_7-cyano-7-deazaG_red"/>
</dbReference>
<dbReference type="InterPro" id="IPR029500">
    <property type="entry name" value="QueF"/>
</dbReference>
<dbReference type="InterPro" id="IPR029139">
    <property type="entry name" value="QueF_N"/>
</dbReference>
<dbReference type="InterPro" id="IPR016428">
    <property type="entry name" value="QueF_type2"/>
</dbReference>
<dbReference type="NCBIfam" id="TIGR03138">
    <property type="entry name" value="QueF"/>
    <property type="match status" value="1"/>
</dbReference>
<dbReference type="PANTHER" id="PTHR34354">
    <property type="entry name" value="NADPH-DEPENDENT 7-CYANO-7-DEAZAGUANINE REDUCTASE"/>
    <property type="match status" value="1"/>
</dbReference>
<dbReference type="PANTHER" id="PTHR34354:SF1">
    <property type="entry name" value="NADPH-DEPENDENT 7-CYANO-7-DEAZAGUANINE REDUCTASE"/>
    <property type="match status" value="1"/>
</dbReference>
<dbReference type="Pfam" id="PF14489">
    <property type="entry name" value="QueF"/>
    <property type="match status" value="1"/>
</dbReference>
<dbReference type="Pfam" id="PF14819">
    <property type="entry name" value="QueF_N"/>
    <property type="match status" value="1"/>
</dbReference>
<dbReference type="PIRSF" id="PIRSF004750">
    <property type="entry name" value="Nitrile_oxidored_YqcD_prd"/>
    <property type="match status" value="1"/>
</dbReference>
<dbReference type="SUPFAM" id="SSF55620">
    <property type="entry name" value="Tetrahydrobiopterin biosynthesis enzymes-like"/>
    <property type="match status" value="1"/>
</dbReference>
<evidence type="ECO:0000255" key="1">
    <source>
        <dbReference type="HAMAP-Rule" id="MF_00817"/>
    </source>
</evidence>
<organism>
    <name type="scientific">Pseudomonas fluorescens (strain Pf0-1)</name>
    <dbReference type="NCBI Taxonomy" id="205922"/>
    <lineage>
        <taxon>Bacteria</taxon>
        <taxon>Pseudomonadati</taxon>
        <taxon>Pseudomonadota</taxon>
        <taxon>Gammaproteobacteria</taxon>
        <taxon>Pseudomonadales</taxon>
        <taxon>Pseudomonadaceae</taxon>
        <taxon>Pseudomonas</taxon>
    </lineage>
</organism>
<comment type="function">
    <text evidence="1">Catalyzes the NADPH-dependent reduction of 7-cyano-7-deazaguanine (preQ0) to 7-aminomethyl-7-deazaguanine (preQ1).</text>
</comment>
<comment type="catalytic activity">
    <reaction evidence="1">
        <text>7-aminomethyl-7-carbaguanine + 2 NADP(+) = 7-cyano-7-deazaguanine + 2 NADPH + 3 H(+)</text>
        <dbReference type="Rhea" id="RHEA:13409"/>
        <dbReference type="ChEBI" id="CHEBI:15378"/>
        <dbReference type="ChEBI" id="CHEBI:45075"/>
        <dbReference type="ChEBI" id="CHEBI:57783"/>
        <dbReference type="ChEBI" id="CHEBI:58349"/>
        <dbReference type="ChEBI" id="CHEBI:58703"/>
        <dbReference type="EC" id="1.7.1.13"/>
    </reaction>
</comment>
<comment type="pathway">
    <text evidence="1">tRNA modification; tRNA-queuosine biosynthesis.</text>
</comment>
<comment type="subunit">
    <text evidence="1">Homodimer.</text>
</comment>
<comment type="subcellular location">
    <subcellularLocation>
        <location evidence="1">Cytoplasm</location>
    </subcellularLocation>
</comment>
<comment type="similarity">
    <text evidence="1">Belongs to the GTP cyclohydrolase I family. QueF type 2 subfamily.</text>
</comment>
<accession>Q3K9G4</accession>
<protein>
    <recommendedName>
        <fullName evidence="1">NADPH-dependent 7-cyano-7-deazaguanine reductase</fullName>
        <ecNumber evidence="1">1.7.1.13</ecNumber>
    </recommendedName>
    <alternativeName>
        <fullName evidence="1">7-cyano-7-carbaguanine reductase</fullName>
    </alternativeName>
    <alternativeName>
        <fullName evidence="1">NADPH-dependent nitrile oxidoreductase</fullName>
    </alternativeName>
    <alternativeName>
        <fullName evidence="1">PreQ(0) reductase</fullName>
    </alternativeName>
</protein>